<keyword id="KW-0004">4Fe-4S</keyword>
<keyword id="KW-0963">Cytoplasm</keyword>
<keyword id="KW-0408">Iron</keyword>
<keyword id="KW-0411">Iron-sulfur</keyword>
<keyword id="KW-0479">Metal-binding</keyword>
<keyword id="KW-0560">Oxidoreductase</keyword>
<keyword id="KW-1185">Reference proteome</keyword>
<protein>
    <recommendedName>
        <fullName evidence="1">Hydroxylamine reductase</fullName>
        <ecNumber evidence="1">1.7.99.1</ecNumber>
    </recommendedName>
    <alternativeName>
        <fullName evidence="1">Hybrid-cluster protein</fullName>
        <shortName evidence="1">HCP</shortName>
    </alternativeName>
    <alternativeName>
        <fullName evidence="1">Prismane protein</fullName>
    </alternativeName>
</protein>
<dbReference type="EC" id="1.7.99.1" evidence="1"/>
<dbReference type="EMBL" id="CP000140">
    <property type="protein sequence ID" value="ABR43468.1"/>
    <property type="molecule type" value="Genomic_DNA"/>
</dbReference>
<dbReference type="RefSeq" id="WP_008779576.1">
    <property type="nucleotide sequence ID" value="NC_009615.1"/>
</dbReference>
<dbReference type="SMR" id="A6LCQ4"/>
<dbReference type="STRING" id="435591.BDI_1721"/>
<dbReference type="PaxDb" id="435591-BDI_1721"/>
<dbReference type="KEGG" id="pdi:BDI_1721"/>
<dbReference type="eggNOG" id="COG1151">
    <property type="taxonomic scope" value="Bacteria"/>
</dbReference>
<dbReference type="HOGENOM" id="CLU_038344_2_0_10"/>
<dbReference type="BioCyc" id="PDIS435591:G1G5A-1771-MONOMER"/>
<dbReference type="Proteomes" id="UP000000566">
    <property type="component" value="Chromosome"/>
</dbReference>
<dbReference type="GO" id="GO:0005737">
    <property type="term" value="C:cytoplasm"/>
    <property type="evidence" value="ECO:0007669"/>
    <property type="project" value="UniProtKB-SubCell"/>
</dbReference>
<dbReference type="GO" id="GO:0051539">
    <property type="term" value="F:4 iron, 4 sulfur cluster binding"/>
    <property type="evidence" value="ECO:0007669"/>
    <property type="project" value="UniProtKB-KW"/>
</dbReference>
<dbReference type="GO" id="GO:0050418">
    <property type="term" value="F:hydroxylamine reductase activity"/>
    <property type="evidence" value="ECO:0007669"/>
    <property type="project" value="UniProtKB-UniRule"/>
</dbReference>
<dbReference type="GO" id="GO:0046872">
    <property type="term" value="F:metal ion binding"/>
    <property type="evidence" value="ECO:0007669"/>
    <property type="project" value="UniProtKB-KW"/>
</dbReference>
<dbReference type="GO" id="GO:0004601">
    <property type="term" value="F:peroxidase activity"/>
    <property type="evidence" value="ECO:0007669"/>
    <property type="project" value="TreeGrafter"/>
</dbReference>
<dbReference type="GO" id="GO:0042542">
    <property type="term" value="P:response to hydrogen peroxide"/>
    <property type="evidence" value="ECO:0007669"/>
    <property type="project" value="TreeGrafter"/>
</dbReference>
<dbReference type="CDD" id="cd01914">
    <property type="entry name" value="HCP"/>
    <property type="match status" value="1"/>
</dbReference>
<dbReference type="FunFam" id="1.20.1270.20:FF:000001">
    <property type="entry name" value="Hydroxylamine reductase"/>
    <property type="match status" value="1"/>
</dbReference>
<dbReference type="FunFam" id="3.40.50.2030:FF:000001">
    <property type="entry name" value="Hydroxylamine reductase"/>
    <property type="match status" value="1"/>
</dbReference>
<dbReference type="FunFam" id="3.40.50.2030:FF:000002">
    <property type="entry name" value="Hydroxylamine reductase"/>
    <property type="match status" value="1"/>
</dbReference>
<dbReference type="Gene3D" id="1.20.1270.20">
    <property type="match status" value="2"/>
</dbReference>
<dbReference type="Gene3D" id="3.40.50.2030">
    <property type="match status" value="2"/>
</dbReference>
<dbReference type="HAMAP" id="MF_00069">
    <property type="entry name" value="Hydroxylam_reduct"/>
    <property type="match status" value="1"/>
</dbReference>
<dbReference type="InterPro" id="IPR004137">
    <property type="entry name" value="HCP/CODH"/>
</dbReference>
<dbReference type="InterPro" id="IPR010048">
    <property type="entry name" value="Hydroxylam_reduct"/>
</dbReference>
<dbReference type="InterPro" id="IPR016099">
    <property type="entry name" value="Prismane-like_a/b-sand"/>
</dbReference>
<dbReference type="InterPro" id="IPR011254">
    <property type="entry name" value="Prismane-like_sf"/>
</dbReference>
<dbReference type="InterPro" id="IPR016100">
    <property type="entry name" value="Prismane_a-bundle"/>
</dbReference>
<dbReference type="NCBIfam" id="TIGR01703">
    <property type="entry name" value="hybrid_clust"/>
    <property type="match status" value="1"/>
</dbReference>
<dbReference type="NCBIfam" id="NF003658">
    <property type="entry name" value="PRK05290.1"/>
    <property type="match status" value="1"/>
</dbReference>
<dbReference type="PANTHER" id="PTHR30109">
    <property type="entry name" value="HYDROXYLAMINE REDUCTASE"/>
    <property type="match status" value="1"/>
</dbReference>
<dbReference type="PANTHER" id="PTHR30109:SF0">
    <property type="entry name" value="HYDROXYLAMINE REDUCTASE"/>
    <property type="match status" value="1"/>
</dbReference>
<dbReference type="Pfam" id="PF03063">
    <property type="entry name" value="Prismane"/>
    <property type="match status" value="1"/>
</dbReference>
<dbReference type="PIRSF" id="PIRSF000076">
    <property type="entry name" value="HCP"/>
    <property type="match status" value="1"/>
</dbReference>
<dbReference type="SUPFAM" id="SSF56821">
    <property type="entry name" value="Prismane protein-like"/>
    <property type="match status" value="1"/>
</dbReference>
<proteinExistence type="inferred from homology"/>
<feature type="chain" id="PRO_1000118022" description="Hydroxylamine reductase">
    <location>
        <begin position="1"/>
        <end position="548"/>
    </location>
</feature>
<feature type="binding site" evidence="1">
    <location>
        <position position="3"/>
    </location>
    <ligand>
        <name>[4Fe-4S] cluster</name>
        <dbReference type="ChEBI" id="CHEBI:49883"/>
    </ligand>
</feature>
<feature type="binding site" evidence="1">
    <location>
        <position position="6"/>
    </location>
    <ligand>
        <name>[4Fe-4S] cluster</name>
        <dbReference type="ChEBI" id="CHEBI:49883"/>
    </ligand>
</feature>
<feature type="binding site" evidence="1">
    <location>
        <position position="15"/>
    </location>
    <ligand>
        <name>[4Fe-4S] cluster</name>
        <dbReference type="ChEBI" id="CHEBI:49883"/>
    </ligand>
</feature>
<feature type="binding site" evidence="1">
    <location>
        <position position="21"/>
    </location>
    <ligand>
        <name>[4Fe-4S] cluster</name>
        <dbReference type="ChEBI" id="CHEBI:49883"/>
    </ligand>
</feature>
<feature type="binding site" evidence="1">
    <location>
        <position position="240"/>
    </location>
    <ligand>
        <name>hybrid [4Fe-2O-2S] cluster</name>
        <dbReference type="ChEBI" id="CHEBI:60519"/>
    </ligand>
</feature>
<feature type="binding site" evidence="1">
    <location>
        <position position="264"/>
    </location>
    <ligand>
        <name>hybrid [4Fe-2O-2S] cluster</name>
        <dbReference type="ChEBI" id="CHEBI:60519"/>
    </ligand>
</feature>
<feature type="binding site" evidence="1">
    <location>
        <position position="308"/>
    </location>
    <ligand>
        <name>hybrid [4Fe-2O-2S] cluster</name>
        <dbReference type="ChEBI" id="CHEBI:60519"/>
    </ligand>
</feature>
<feature type="binding site" description="via persulfide group" evidence="1">
    <location>
        <position position="402"/>
    </location>
    <ligand>
        <name>hybrid [4Fe-2O-2S] cluster</name>
        <dbReference type="ChEBI" id="CHEBI:60519"/>
    </ligand>
</feature>
<feature type="binding site" evidence="1">
    <location>
        <position position="430"/>
    </location>
    <ligand>
        <name>hybrid [4Fe-2O-2S] cluster</name>
        <dbReference type="ChEBI" id="CHEBI:60519"/>
    </ligand>
</feature>
<feature type="binding site" evidence="1">
    <location>
        <position position="455"/>
    </location>
    <ligand>
        <name>hybrid [4Fe-2O-2S] cluster</name>
        <dbReference type="ChEBI" id="CHEBI:60519"/>
    </ligand>
</feature>
<feature type="binding site" evidence="1">
    <location>
        <position position="490"/>
    </location>
    <ligand>
        <name>hybrid [4Fe-2O-2S] cluster</name>
        <dbReference type="ChEBI" id="CHEBI:60519"/>
    </ligand>
</feature>
<feature type="binding site" evidence="1">
    <location>
        <position position="492"/>
    </location>
    <ligand>
        <name>hybrid [4Fe-2O-2S] cluster</name>
        <dbReference type="ChEBI" id="CHEBI:60519"/>
    </ligand>
</feature>
<feature type="modified residue" description="Cysteine persulfide" evidence="1">
    <location>
        <position position="402"/>
    </location>
</feature>
<name>HCP_PARD8</name>
<comment type="function">
    <text evidence="1">Catalyzes the reduction of hydroxylamine to form NH(3) and H(2)O.</text>
</comment>
<comment type="catalytic activity">
    <reaction evidence="1">
        <text>A + NH4(+) + H2O = hydroxylamine + AH2 + H(+)</text>
        <dbReference type="Rhea" id="RHEA:22052"/>
        <dbReference type="ChEBI" id="CHEBI:13193"/>
        <dbReference type="ChEBI" id="CHEBI:15377"/>
        <dbReference type="ChEBI" id="CHEBI:15378"/>
        <dbReference type="ChEBI" id="CHEBI:15429"/>
        <dbReference type="ChEBI" id="CHEBI:17499"/>
        <dbReference type="ChEBI" id="CHEBI:28938"/>
        <dbReference type="EC" id="1.7.99.1"/>
    </reaction>
</comment>
<comment type="cofactor">
    <cofactor evidence="1">
        <name>[4Fe-4S] cluster</name>
        <dbReference type="ChEBI" id="CHEBI:49883"/>
    </cofactor>
    <text evidence="1">Binds 1 [4Fe-4S] cluster.</text>
</comment>
<comment type="cofactor">
    <cofactor evidence="1">
        <name>hybrid [4Fe-2O-2S] cluster</name>
        <dbReference type="ChEBI" id="CHEBI:60519"/>
    </cofactor>
    <text evidence="1">Binds 1 hybrid [4Fe-2O-2S] cluster.</text>
</comment>
<comment type="subcellular location">
    <subcellularLocation>
        <location evidence="1">Cytoplasm</location>
    </subcellularLocation>
</comment>
<comment type="similarity">
    <text evidence="1">Belongs to the HCP family.</text>
</comment>
<evidence type="ECO:0000255" key="1">
    <source>
        <dbReference type="HAMAP-Rule" id="MF_00069"/>
    </source>
</evidence>
<reference key="1">
    <citation type="journal article" date="2007" name="PLoS Biol.">
        <title>Evolution of symbiotic bacteria in the distal human intestine.</title>
        <authorList>
            <person name="Xu J."/>
            <person name="Mahowald M.A."/>
            <person name="Ley R.E."/>
            <person name="Lozupone C.A."/>
            <person name="Hamady M."/>
            <person name="Martens E.C."/>
            <person name="Henrissat B."/>
            <person name="Coutinho P.M."/>
            <person name="Minx P."/>
            <person name="Latreille P."/>
            <person name="Cordum H."/>
            <person name="Van Brunt A."/>
            <person name="Kim K."/>
            <person name="Fulton R.S."/>
            <person name="Fulton L.A."/>
            <person name="Clifton S.W."/>
            <person name="Wilson R.K."/>
            <person name="Knight R.D."/>
            <person name="Gordon J.I."/>
        </authorList>
    </citation>
    <scope>NUCLEOTIDE SEQUENCE [LARGE SCALE GENOMIC DNA]</scope>
    <source>
        <strain>ATCC 8503 / DSM 20701 / CIP 104284 / JCM 5825 / NCTC 11152</strain>
    </source>
</reference>
<sequence length="548" mass="60469">MFCYQCQETAQGKGCTLKGVCGKTAEVAGLQDLLMYLMKGISKLTTTLRKQGVESSTANKFIVDGLFMTITNANFDSSRFVSKIKEAYQLRENLLNELHRLGIHLSLTCDCLTWKSDKVEEMEVKAKEVGILATENEDIRSLCELLTYGVKGMAAYVEHAYNLGFEDTSLYAFMQDALVATTRSDLTVADLTQWVLTCGEYGVKAMALLDKANTSTYGNPEITKVNIGVGKNPGILISGHDLRDIQDLLEQTEGTGIDVYTHGEMLPAHYYPAFKKYKHFVGNYGSAWWKQTSDFETFNGVILFTTNCLVPPRSSATYADRVYTTGSTGFEGFPHIADRKPGGSKDFSALIEHAKKCAPPTEIEHGEIIGGFAHEQVFQLADKVIDAVKSGAIRKFFVMAGCDGRMKSRSYYTEFAEKLPKDTVILTAGCAKYRYNKLPLGEIRGIPRVLDAGQCNDSYSLVMIALKLKEIFGLDDVNELPIAYNIAWYEQKAVIVLLALLYLGVKNIHLGPTLPAFLSPNVAKVLVDNFGIAGIGSVDEDMELFLGK</sequence>
<organism>
    <name type="scientific">Parabacteroides distasonis (strain ATCC 8503 / DSM 20701 / CIP 104284 / JCM 5825 / NCTC 11152)</name>
    <dbReference type="NCBI Taxonomy" id="435591"/>
    <lineage>
        <taxon>Bacteria</taxon>
        <taxon>Pseudomonadati</taxon>
        <taxon>Bacteroidota</taxon>
        <taxon>Bacteroidia</taxon>
        <taxon>Bacteroidales</taxon>
        <taxon>Tannerellaceae</taxon>
        <taxon>Parabacteroides</taxon>
    </lineage>
</organism>
<accession>A6LCQ4</accession>
<gene>
    <name evidence="1" type="primary">hcp</name>
    <name type="ordered locus">BDI_1721</name>
</gene>